<gene>
    <name type="primary">HAP2</name>
    <name evidence="11" type="synonym">GCS1</name>
    <name type="ordered locus">At4g11720</name>
    <name type="ORF">T5C23</name>
</gene>
<name>HAP2_ARATH</name>
<comment type="function">
    <text evidence="4 5 6 7 8 9">Required for male fertility (PubMed:17079265, PubMed:20333238). Plays a role in pollen tube guidance and successful gamete attachment (PubMed:17079265). Essential for the fusion of gametes during double fertilization, where one male gamete fuses with the egg to produce a zygote, and another male gamete fuses with the central cell to produce the endosperm (PubMed:17079265, PubMed:20333238, PubMed:21209845). Mediates the fusion of cell membranes (PubMed:28137780). Not required for pollen tube outgrowth (PubMed:17079265, PubMed:20333238).</text>
</comment>
<comment type="subcellular location">
    <subcellularLocation>
        <location evidence="5 14">Endoplasmic reticulum membrane</location>
        <topology evidence="1">Single-pass membrane protein</topology>
    </subcellularLocation>
    <subcellularLocation>
        <location evidence="4 5 8 9">Cell membrane</location>
        <topology evidence="9">Single-pass type I membrane protein</topology>
    </subcellularLocation>
    <text evidence="5 8">Predominantly localized in a perinuclear ring (PubMed:17079265). Redistribution to the cell membrane is mediated by EC1 peptides after their secretion upon sperm arrival (PubMed:23180860).</text>
</comment>
<comment type="tissue specificity">
    <text evidence="4 5">Expressed only in mature pollen, in the two sperm cells.</text>
</comment>
<comment type="developmental stage">
    <text evidence="4">Expressed during pollen development and tube growth.</text>
</comment>
<comment type="domain">
    <text evidence="6 7">The N-terminal domain (62-541)and the C-terminal domain (583-705) are both required for functional gamete fusion. A positive charge, and not a conserved primary amino acid sequence, is required for a functional C-terminal domain. The N-terminal domain may be involved in interactions with another membrane-bound protein on female gametes, while positively charged C-terminus may function through electrostatic interactions with the sperm plasma membrane.</text>
</comment>
<comment type="disruption phenotype">
    <text evidence="4 5">Defective in pollen tube guidance. Prevents gamete interaction and fertilization, resulting in male sterility.</text>
</comment>
<comment type="miscellaneous">
    <text evidence="12">HAP2/GCS1 family members mediate membrane fusion between gametes in a broad range of eukaryotes, ranging from algae and higher plants to protozoans and cnidaria, suggesting they are derived from an ancestral gamete fusogen. They function similar to viral fusogens, by inserting part of their extracellular domain into the lipid bilayer of an adjoining cell.</text>
</comment>
<comment type="similarity">
    <text evidence="13">Belongs to the HAP2/GCS1 family.</text>
</comment>
<comment type="sequence caution" evidence="13">
    <conflict type="erroneous gene model prediction">
        <sequence resource="EMBL-CDS" id="CAB39943"/>
    </conflict>
</comment>
<comment type="sequence caution" evidence="13">
    <conflict type="erroneous gene model prediction">
        <sequence resource="EMBL-CDS" id="CAB78215"/>
    </conflict>
</comment>
<comment type="online information" name="Protein Spotlight">
    <link uri="https://www.proteinspotlight.org/back_issues/146"/>
    <text>A wretched tale - Issue 146 of January 2013</text>
</comment>
<evidence type="ECO:0000255" key="1"/>
<evidence type="ECO:0000255" key="2">
    <source>
        <dbReference type="PROSITE-ProRule" id="PRU00498"/>
    </source>
</evidence>
<evidence type="ECO:0000256" key="3">
    <source>
        <dbReference type="SAM" id="MobiDB-lite"/>
    </source>
</evidence>
<evidence type="ECO:0000269" key="4">
    <source>
    </source>
</evidence>
<evidence type="ECO:0000269" key="5">
    <source>
    </source>
</evidence>
<evidence type="ECO:0000269" key="6">
    <source>
    </source>
</evidence>
<evidence type="ECO:0000269" key="7">
    <source>
    </source>
</evidence>
<evidence type="ECO:0000269" key="8">
    <source>
    </source>
</evidence>
<evidence type="ECO:0000269" key="9">
    <source>
    </source>
</evidence>
<evidence type="ECO:0000269" key="10">
    <source>
    </source>
</evidence>
<evidence type="ECO:0000303" key="11">
    <source>
    </source>
</evidence>
<evidence type="ECO:0000303" key="12">
    <source>
    </source>
</evidence>
<evidence type="ECO:0000305" key="13"/>
<evidence type="ECO:0000305" key="14">
    <source>
    </source>
</evidence>
<evidence type="ECO:0007744" key="15">
    <source>
        <dbReference type="PDB" id="5OW3"/>
    </source>
</evidence>
<evidence type="ECO:0007829" key="16">
    <source>
        <dbReference type="PDB" id="5OW3"/>
    </source>
</evidence>
<sequence>MVNAILMACILAGIFVGMFNEVDGIQILSKSKLEKCEKTSDSGNLNCSTKIVLNLAVPSGSSGGEASIVAEIVEVEDNSSSNMQTVRIPPVITVNKSAAYALYDLTYIRDVPYKPQEYHVTTRKCEHDAGPDIVQICERLRDEKGNVLEQTQPICCPCGPQRRMPSSCGDIFDKMIKGKANTAHCLRFPGDWFHVFGIGQRSLGFSVRVELKTGTRVSEVIIGPENRTATANDNFLKVNLIGDFGGYTSIPSFEDFYLVIPREAAEAGQPGSLGANYSMWMLLERVRFTLDGLECNKIGVGYEAFNTQPNFCSSPYWSCLHNQLWNFRESDINRIDRHQLPLYGLEGRFERINQHPNAGPHSFSIGVTETLNTNLMIELRADDIEYVFQRSPGKIINIAIPTFEALTQFGVAAVIIKNTGEVEASYSLTFDCSKGVAFVEEQFFIIKPKAVTTRSFKLYPTKDQAAKYICTAILKDSQFSEVDRAECQFSTTATVLDNGTQVTNPFQIPETQPKGFFDSIRILWTKIINGLVDFITGDTCRNKCSSFFDFSCHIQYVCLSWMVMFGLLLALFPITCLLLWLLHQKGLFDPCYDWWEDHFDLDHHRRLLPSRADVVNRHHHHHKHRHHHNHHRRTHQRHKHHHGQDDDVLQKMMLERDHSDSHYYHQLHRVHKDSKQKQRRRAKHGIVLPRDVHVERQRKQRLRES</sequence>
<dbReference type="EMBL" id="DQ022375">
    <property type="protein sequence ID" value="AAY51999.1"/>
    <property type="molecule type" value="mRNA"/>
</dbReference>
<dbReference type="EMBL" id="DQ022676">
    <property type="protein sequence ID" value="AAY51998.1"/>
    <property type="molecule type" value="Genomic_DNA"/>
</dbReference>
<dbReference type="EMBL" id="AB206811">
    <property type="protein sequence ID" value="BAE71143.2"/>
    <property type="molecule type" value="mRNA"/>
</dbReference>
<dbReference type="EMBL" id="AL049500">
    <property type="protein sequence ID" value="CAB39943.1"/>
    <property type="status" value="ALT_SEQ"/>
    <property type="molecule type" value="Genomic_DNA"/>
</dbReference>
<dbReference type="EMBL" id="AL161532">
    <property type="protein sequence ID" value="CAB78215.1"/>
    <property type="status" value="ALT_SEQ"/>
    <property type="molecule type" value="Genomic_DNA"/>
</dbReference>
<dbReference type="EMBL" id="CP002687">
    <property type="protein sequence ID" value="AEE83041.1"/>
    <property type="molecule type" value="Genomic_DNA"/>
</dbReference>
<dbReference type="PIR" id="T04219">
    <property type="entry name" value="T04219"/>
</dbReference>
<dbReference type="RefSeq" id="NP_192909.2">
    <property type="nucleotide sequence ID" value="NM_117241.2"/>
</dbReference>
<dbReference type="PDB" id="5OW3">
    <property type="method" value="X-ray"/>
    <property type="resolution" value="2.75 A"/>
    <property type="chains" value="C=24-494"/>
</dbReference>
<dbReference type="PDBsum" id="5OW3"/>
<dbReference type="SMR" id="F4JP36"/>
<dbReference type="STRING" id="3702.F4JP36"/>
<dbReference type="TCDB" id="1.N.3.1.1">
    <property type="family name" value="the hapless2 male gamete fusion factor (fusexin) family"/>
</dbReference>
<dbReference type="GlyCosmos" id="F4JP36">
    <property type="glycosylation" value="6 sites, No reported glycans"/>
</dbReference>
<dbReference type="GlyGen" id="F4JP36">
    <property type="glycosylation" value="6 sites"/>
</dbReference>
<dbReference type="iPTMnet" id="F4JP36"/>
<dbReference type="PaxDb" id="3702-AT4G11720.1"/>
<dbReference type="ProteomicsDB" id="247211"/>
<dbReference type="EnsemblPlants" id="AT4G11720.1">
    <property type="protein sequence ID" value="AT4G11720.1"/>
    <property type="gene ID" value="AT4G11720"/>
</dbReference>
<dbReference type="GeneID" id="826777"/>
<dbReference type="Gramene" id="AT4G11720.1">
    <property type="protein sequence ID" value="AT4G11720.1"/>
    <property type="gene ID" value="AT4G11720"/>
</dbReference>
<dbReference type="KEGG" id="ath:AT4G11720"/>
<dbReference type="Araport" id="AT4G11720"/>
<dbReference type="TAIR" id="AT4G11720">
    <property type="gene designation" value="HAP2"/>
</dbReference>
<dbReference type="eggNOG" id="ENOG502QREH">
    <property type="taxonomic scope" value="Eukaryota"/>
</dbReference>
<dbReference type="HOGENOM" id="CLU_022353_1_0_1"/>
<dbReference type="InParanoid" id="F4JP36"/>
<dbReference type="OMA" id="YRYPLFY"/>
<dbReference type="PRO" id="PR:F4JP36"/>
<dbReference type="Proteomes" id="UP000006548">
    <property type="component" value="Chromosome 4"/>
</dbReference>
<dbReference type="ExpressionAtlas" id="F4JP36">
    <property type="expression patterns" value="baseline and differential"/>
</dbReference>
<dbReference type="GO" id="GO:0005783">
    <property type="term" value="C:endoplasmic reticulum"/>
    <property type="evidence" value="ECO:0000314"/>
    <property type="project" value="TAIR"/>
</dbReference>
<dbReference type="GO" id="GO:0005789">
    <property type="term" value="C:endoplasmic reticulum membrane"/>
    <property type="evidence" value="ECO:0007669"/>
    <property type="project" value="UniProtKB-SubCell"/>
</dbReference>
<dbReference type="GO" id="GO:0005886">
    <property type="term" value="C:plasma membrane"/>
    <property type="evidence" value="ECO:0000314"/>
    <property type="project" value="UniProtKB"/>
</dbReference>
<dbReference type="GO" id="GO:0008289">
    <property type="term" value="F:lipid binding"/>
    <property type="evidence" value="ECO:0007669"/>
    <property type="project" value="UniProtKB-KW"/>
</dbReference>
<dbReference type="GO" id="GO:0009567">
    <property type="term" value="P:double fertilization forming a zygote and endosperm"/>
    <property type="evidence" value="ECO:0000315"/>
    <property type="project" value="UniProtKB"/>
</dbReference>
<dbReference type="GO" id="GO:0061936">
    <property type="term" value="P:fusion of sperm to egg plasma membrane involved in double fertilization forming a zygote and endosperm"/>
    <property type="evidence" value="ECO:0000315"/>
    <property type="project" value="UniProtKB"/>
</dbReference>
<dbReference type="GO" id="GO:0045026">
    <property type="term" value="P:plasma membrane fusion"/>
    <property type="evidence" value="ECO:0000314"/>
    <property type="project" value="UniProtKB"/>
</dbReference>
<dbReference type="GO" id="GO:0048235">
    <property type="term" value="P:pollen sperm cell differentiation"/>
    <property type="evidence" value="ECO:0000270"/>
    <property type="project" value="TAIR"/>
</dbReference>
<dbReference type="GO" id="GO:0010183">
    <property type="term" value="P:pollen tube guidance"/>
    <property type="evidence" value="ECO:0000315"/>
    <property type="project" value="TAIR"/>
</dbReference>
<dbReference type="InterPro" id="IPR040326">
    <property type="entry name" value="HAP2/GCS1"/>
</dbReference>
<dbReference type="InterPro" id="IPR018928">
    <property type="entry name" value="HAP2/GCS1_dom"/>
</dbReference>
<dbReference type="PANTHER" id="PTHR31764:SF0">
    <property type="entry name" value="GENERATIVE CELL SPECIFIC-1_HAP2 DOMAIN-CONTAINING PROTEIN"/>
    <property type="match status" value="1"/>
</dbReference>
<dbReference type="PANTHER" id="PTHR31764">
    <property type="entry name" value="PROTEIN HAPLESS 2"/>
    <property type="match status" value="1"/>
</dbReference>
<dbReference type="Pfam" id="PF10699">
    <property type="entry name" value="HAP2-GCS1"/>
    <property type="match status" value="1"/>
</dbReference>
<reference key="1">
    <citation type="journal article" date="2006" name="Development">
        <title>Arabidopsis HAP2 (GCS1) is a sperm-specific gene required for pollen tube guidance and fertilization.</title>
        <authorList>
            <person name="von Besser K."/>
            <person name="Frank A.C."/>
            <person name="Johnson M.A."/>
            <person name="Preuss D."/>
        </authorList>
    </citation>
    <scope>NUCLEOTIDE SEQUENCE [GENOMIC DNA / MRNA]</scope>
    <scope>FUNCTION</scope>
    <scope>DISRUPTION PHENOTYPE</scope>
    <scope>TISSUE SPECIFICITY</scope>
    <scope>SUBCELLULAR LOCATION</scope>
    <source>
        <strain>cv. Columbia</strain>
        <tissue>Pollen</tissue>
    </source>
</reference>
<reference key="2">
    <citation type="journal article" date="2006" name="Nat. Cell Biol.">
        <title>GENERATIVE CELL SPECIFIC 1 is essential for angiosperm fertilization.</title>
        <authorList>
            <person name="Mori T."/>
            <person name="Kuroiwa H."/>
            <person name="Higashiyama T."/>
            <person name="Kuroiwa T."/>
        </authorList>
    </citation>
    <scope>NUCLEOTIDE SEQUENCE [MRNA]</scope>
    <scope>FUNCTION</scope>
    <scope>DISRUPTION PHENOTYPE</scope>
    <scope>TISSUE SPECIFICITY</scope>
    <scope>SUBCELLULAR LOCATION</scope>
    <scope>DEVELOPMENTAL STAGE</scope>
    <source>
        <strain>cv. Columbia</strain>
        <tissue>Flower</tissue>
    </source>
</reference>
<reference key="3">
    <citation type="journal article" date="1999" name="Nature">
        <title>Sequence and analysis of chromosome 4 of the plant Arabidopsis thaliana.</title>
        <authorList>
            <person name="Mayer K.F.X."/>
            <person name="Schueller C."/>
            <person name="Wambutt R."/>
            <person name="Murphy G."/>
            <person name="Volckaert G."/>
            <person name="Pohl T."/>
            <person name="Duesterhoeft A."/>
            <person name="Stiekema W."/>
            <person name="Entian K.-D."/>
            <person name="Terryn N."/>
            <person name="Harris B."/>
            <person name="Ansorge W."/>
            <person name="Brandt P."/>
            <person name="Grivell L.A."/>
            <person name="Rieger M."/>
            <person name="Weichselgartner M."/>
            <person name="de Simone V."/>
            <person name="Obermaier B."/>
            <person name="Mache R."/>
            <person name="Mueller M."/>
            <person name="Kreis M."/>
            <person name="Delseny M."/>
            <person name="Puigdomenech P."/>
            <person name="Watson M."/>
            <person name="Schmidtheini T."/>
            <person name="Reichert B."/>
            <person name="Portetelle D."/>
            <person name="Perez-Alonso M."/>
            <person name="Boutry M."/>
            <person name="Bancroft I."/>
            <person name="Vos P."/>
            <person name="Hoheisel J."/>
            <person name="Zimmermann W."/>
            <person name="Wedler H."/>
            <person name="Ridley P."/>
            <person name="Langham S.-A."/>
            <person name="McCullagh B."/>
            <person name="Bilham L."/>
            <person name="Robben J."/>
            <person name="van der Schueren J."/>
            <person name="Grymonprez B."/>
            <person name="Chuang Y.-J."/>
            <person name="Vandenbussche F."/>
            <person name="Braeken M."/>
            <person name="Weltjens I."/>
            <person name="Voet M."/>
            <person name="Bastiaens I."/>
            <person name="Aert R."/>
            <person name="Defoor E."/>
            <person name="Weitzenegger T."/>
            <person name="Bothe G."/>
            <person name="Ramsperger U."/>
            <person name="Hilbert H."/>
            <person name="Braun M."/>
            <person name="Holzer E."/>
            <person name="Brandt A."/>
            <person name="Peters S."/>
            <person name="van Staveren M."/>
            <person name="Dirkse W."/>
            <person name="Mooijman P."/>
            <person name="Klein Lankhorst R."/>
            <person name="Rose M."/>
            <person name="Hauf J."/>
            <person name="Koetter P."/>
            <person name="Berneiser S."/>
            <person name="Hempel S."/>
            <person name="Feldpausch M."/>
            <person name="Lamberth S."/>
            <person name="Van den Daele H."/>
            <person name="De Keyser A."/>
            <person name="Buysshaert C."/>
            <person name="Gielen J."/>
            <person name="Villarroel R."/>
            <person name="De Clercq R."/>
            <person name="van Montagu M."/>
            <person name="Rogers J."/>
            <person name="Cronin A."/>
            <person name="Quail M.A."/>
            <person name="Bray-Allen S."/>
            <person name="Clark L."/>
            <person name="Doggett J."/>
            <person name="Hall S."/>
            <person name="Kay M."/>
            <person name="Lennard N."/>
            <person name="McLay K."/>
            <person name="Mayes R."/>
            <person name="Pettett A."/>
            <person name="Rajandream M.A."/>
            <person name="Lyne M."/>
            <person name="Benes V."/>
            <person name="Rechmann S."/>
            <person name="Borkova D."/>
            <person name="Bloecker H."/>
            <person name="Scharfe M."/>
            <person name="Grimm M."/>
            <person name="Loehnert T.-H."/>
            <person name="Dose S."/>
            <person name="de Haan M."/>
            <person name="Maarse A.C."/>
            <person name="Schaefer M."/>
            <person name="Mueller-Auer S."/>
            <person name="Gabel C."/>
            <person name="Fuchs M."/>
            <person name="Fartmann B."/>
            <person name="Granderath K."/>
            <person name="Dauner D."/>
            <person name="Herzl A."/>
            <person name="Neumann S."/>
            <person name="Argiriou A."/>
            <person name="Vitale D."/>
            <person name="Liguori R."/>
            <person name="Piravandi E."/>
            <person name="Massenet O."/>
            <person name="Quigley F."/>
            <person name="Clabauld G."/>
            <person name="Muendlein A."/>
            <person name="Felber R."/>
            <person name="Schnabl S."/>
            <person name="Hiller R."/>
            <person name="Schmidt W."/>
            <person name="Lecharny A."/>
            <person name="Aubourg S."/>
            <person name="Chefdor F."/>
            <person name="Cooke R."/>
            <person name="Berger C."/>
            <person name="Monfort A."/>
            <person name="Casacuberta E."/>
            <person name="Gibbons T."/>
            <person name="Weber N."/>
            <person name="Vandenbol M."/>
            <person name="Bargues M."/>
            <person name="Terol J."/>
            <person name="Torres A."/>
            <person name="Perez-Perez A."/>
            <person name="Purnelle B."/>
            <person name="Bent E."/>
            <person name="Johnson S."/>
            <person name="Tacon D."/>
            <person name="Jesse T."/>
            <person name="Heijnen L."/>
            <person name="Schwarz S."/>
            <person name="Scholler P."/>
            <person name="Heber S."/>
            <person name="Francs P."/>
            <person name="Bielke C."/>
            <person name="Frishman D."/>
            <person name="Haase D."/>
            <person name="Lemcke K."/>
            <person name="Mewes H.-W."/>
            <person name="Stocker S."/>
            <person name="Zaccaria P."/>
            <person name="Bevan M."/>
            <person name="Wilson R.K."/>
            <person name="de la Bastide M."/>
            <person name="Habermann K."/>
            <person name="Parnell L."/>
            <person name="Dedhia N."/>
            <person name="Gnoj L."/>
            <person name="Schutz K."/>
            <person name="Huang E."/>
            <person name="Spiegel L."/>
            <person name="Sekhon M."/>
            <person name="Murray J."/>
            <person name="Sheet P."/>
            <person name="Cordes M."/>
            <person name="Abu-Threideh J."/>
            <person name="Stoneking T."/>
            <person name="Kalicki J."/>
            <person name="Graves T."/>
            <person name="Harmon G."/>
            <person name="Edwards J."/>
            <person name="Latreille P."/>
            <person name="Courtney L."/>
            <person name="Cloud J."/>
            <person name="Abbott A."/>
            <person name="Scott K."/>
            <person name="Johnson D."/>
            <person name="Minx P."/>
            <person name="Bentley D."/>
            <person name="Fulton B."/>
            <person name="Miller N."/>
            <person name="Greco T."/>
            <person name="Kemp K."/>
            <person name="Kramer J."/>
            <person name="Fulton L."/>
            <person name="Mardis E."/>
            <person name="Dante M."/>
            <person name="Pepin K."/>
            <person name="Hillier L.W."/>
            <person name="Nelson J."/>
            <person name="Spieth J."/>
            <person name="Ryan E."/>
            <person name="Andrews S."/>
            <person name="Geisel C."/>
            <person name="Layman D."/>
            <person name="Du H."/>
            <person name="Ali J."/>
            <person name="Berghoff A."/>
            <person name="Jones K."/>
            <person name="Drone K."/>
            <person name="Cotton M."/>
            <person name="Joshu C."/>
            <person name="Antonoiu B."/>
            <person name="Zidanic M."/>
            <person name="Strong C."/>
            <person name="Sun H."/>
            <person name="Lamar B."/>
            <person name="Yordan C."/>
            <person name="Ma P."/>
            <person name="Zhong J."/>
            <person name="Preston R."/>
            <person name="Vil D."/>
            <person name="Shekher M."/>
            <person name="Matero A."/>
            <person name="Shah R."/>
            <person name="Swaby I.K."/>
            <person name="O'Shaughnessy A."/>
            <person name="Rodriguez M."/>
            <person name="Hoffman J."/>
            <person name="Till S."/>
            <person name="Granat S."/>
            <person name="Shohdy N."/>
            <person name="Hasegawa A."/>
            <person name="Hameed A."/>
            <person name="Lodhi M."/>
            <person name="Johnson A."/>
            <person name="Chen E."/>
            <person name="Marra M.A."/>
            <person name="Martienssen R."/>
            <person name="McCombie W.R."/>
        </authorList>
    </citation>
    <scope>NUCLEOTIDE SEQUENCE [LARGE SCALE GENOMIC DNA]</scope>
    <source>
        <strain>cv. Columbia</strain>
    </source>
</reference>
<reference key="4">
    <citation type="journal article" date="2017" name="Plant J.">
        <title>Araport11: a complete reannotation of the Arabidopsis thaliana reference genome.</title>
        <authorList>
            <person name="Cheng C.Y."/>
            <person name="Krishnakumar V."/>
            <person name="Chan A.P."/>
            <person name="Thibaud-Nissen F."/>
            <person name="Schobel S."/>
            <person name="Town C.D."/>
        </authorList>
    </citation>
    <scope>GENOME REANNOTATION</scope>
    <source>
        <strain>cv. Columbia</strain>
    </source>
</reference>
<reference key="5">
    <citation type="journal article" date="2004" name="Genetics">
        <title>Arabidopsis hapless mutations define essential gametophytic functions.</title>
        <authorList>
            <person name="Johnson M.A."/>
            <person name="von Besser K."/>
            <person name="Zhou Q."/>
            <person name="Smith E."/>
            <person name="Aux G."/>
            <person name="Patton D."/>
            <person name="Levin J.Z."/>
            <person name="Preuss D."/>
        </authorList>
    </citation>
    <scope>IDENTIFICATION</scope>
</reference>
<reference key="6">
    <citation type="journal article" date="2010" name="PLoS Genet.">
        <title>HAP2(GCS1)-dependent gamete fusion requires a positively charged carboxy-terminal domain.</title>
        <authorList>
            <person name="Wong J.L."/>
            <person name="Leydon A.R."/>
            <person name="Johnson M.A."/>
        </authorList>
    </citation>
    <scope>FUNCTION</scope>
    <scope>DOMAIN</scope>
</reference>
<reference key="7">
    <citation type="journal article" date="2010" name="PLoS ONE">
        <title>The functional domain of GCS1-based gamete fusion resides in the amino terminus in plant and parasite species.</title>
        <authorList>
            <person name="Mori T."/>
            <person name="Hirai M."/>
            <person name="Kuroiwa T."/>
            <person name="Miyagishima S.Y."/>
        </authorList>
    </citation>
    <scope>FUNCTION</scope>
    <scope>DOMAIN</scope>
</reference>
<reference key="8">
    <citation type="journal article" date="2010" name="Trends Cell Biol.">
        <title>Is HAP2-GCS1 an ancestral gamete fusogen?</title>
        <authorList>
            <person name="Wong J.L."/>
            <person name="Johnson M.A."/>
        </authorList>
    </citation>
    <scope>REVIEW</scope>
</reference>
<reference key="9">
    <citation type="journal article" date="2012" name="Science">
        <title>Egg cell-secreted EC1 triggers sperm cell activation during double fertilization.</title>
        <authorList>
            <person name="Sprunck S."/>
            <person name="Rademacher S."/>
            <person name="Vogler F."/>
            <person name="Gheyselinck J."/>
            <person name="Grossniklaus U."/>
            <person name="Dresselhaus T."/>
        </authorList>
    </citation>
    <scope>FUNCTION</scope>
    <scope>SUBCELLULAR LOCATION</scope>
</reference>
<reference key="10">
    <citation type="journal article" date="2017" name="J. Cell Biol.">
        <title>Arabidopsis HAP2/GCS1 is a gamete fusion protein homologous to somatic and viral fusogens.</title>
        <authorList>
            <person name="Valansi C."/>
            <person name="Moi D."/>
            <person name="Leikina E."/>
            <person name="Matveev E."/>
            <person name="Grana M."/>
            <person name="Chernomordik L.V."/>
            <person name="Romero H."/>
            <person name="Aguilar P.S."/>
            <person name="Podbilewicz B."/>
        </authorList>
    </citation>
    <scope>FUNCTION</scope>
    <scope>SUBCELLULAR LOCATION</scope>
</reference>
<reference key="11">
    <citation type="journal article" date="2018" name="PLoS Biol.">
        <title>Evolutionary diversification of the HAP2 membrane insertion motifs to drive gamete fusion across eukaryotes.</title>
        <authorList>
            <person name="Fedry J."/>
            <person name="Forcina J."/>
            <person name="Legrand P."/>
            <person name="Pehau-Arnaudet G."/>
            <person name="Haouz A."/>
            <person name="Johnson M."/>
            <person name="Rey F.A."/>
            <person name="Krey T."/>
        </authorList>
    </citation>
    <scope>X-RAY CRYSTALLOGRAPHY (2.75 ANGSTROMS) OF 24-494</scope>
    <scope>DISULFIDE BONDS</scope>
    <scope>GLYCOSYLATION AT ASN-226</scope>
</reference>
<keyword id="KW-0002">3D-structure</keyword>
<keyword id="KW-1003">Cell membrane</keyword>
<keyword id="KW-1015">Disulfide bond</keyword>
<keyword id="KW-0256">Endoplasmic reticulum</keyword>
<keyword id="KW-0278">Fertilization</keyword>
<keyword id="KW-0325">Glycoprotein</keyword>
<keyword id="KW-0446">Lipid-binding</keyword>
<keyword id="KW-0472">Membrane</keyword>
<keyword id="KW-1185">Reference proteome</keyword>
<keyword id="KW-0732">Signal</keyword>
<keyword id="KW-0812">Transmembrane</keyword>
<keyword id="KW-1133">Transmembrane helix</keyword>
<proteinExistence type="evidence at protein level"/>
<protein>
    <recommendedName>
        <fullName>Protein HAPLESS 2</fullName>
    </recommendedName>
    <alternativeName>
        <fullName evidence="11">GENERATIVE CELL SPECIFIC 1</fullName>
    </alternativeName>
</protein>
<feature type="signal peptide" evidence="1">
    <location>
        <begin position="1"/>
        <end position="24"/>
    </location>
</feature>
<feature type="chain" id="PRO_0000416780" description="Protein HAPLESS 2">
    <location>
        <begin position="25"/>
        <end position="705"/>
    </location>
</feature>
<feature type="topological domain" description="Extracellular" evidence="1">
    <location>
        <begin position="25"/>
        <end position="561"/>
    </location>
</feature>
<feature type="transmembrane region" description="Helical" evidence="1">
    <location>
        <begin position="562"/>
        <end position="582"/>
    </location>
</feature>
<feature type="topological domain" description="Cytoplasmic" evidence="1">
    <location>
        <begin position="583"/>
        <end position="705"/>
    </location>
</feature>
<feature type="region of interest" description="Disordered" evidence="3">
    <location>
        <begin position="617"/>
        <end position="646"/>
    </location>
</feature>
<feature type="region of interest" description="Disordered" evidence="3">
    <location>
        <begin position="668"/>
        <end position="705"/>
    </location>
</feature>
<feature type="compositionally biased region" description="Basic residues" evidence="3">
    <location>
        <begin position="617"/>
        <end position="642"/>
    </location>
</feature>
<feature type="compositionally biased region" description="Basic residues" evidence="3">
    <location>
        <begin position="668"/>
        <end position="684"/>
    </location>
</feature>
<feature type="compositionally biased region" description="Basic and acidic residues" evidence="3">
    <location>
        <begin position="690"/>
        <end position="705"/>
    </location>
</feature>
<feature type="glycosylation site" description="N-linked (GlcNAc...) asparagine" evidence="2">
    <location>
        <position position="46"/>
    </location>
</feature>
<feature type="glycosylation site" description="N-linked (GlcNAc...) asparagine" evidence="2">
    <location>
        <position position="78"/>
    </location>
</feature>
<feature type="glycosylation site" description="N-linked (GlcNAc...) asparagine" evidence="2">
    <location>
        <position position="95"/>
    </location>
</feature>
<feature type="glycosylation site" description="N-linked (GlcNAc...) asparagine" evidence="2 10 15">
    <location>
        <position position="226"/>
    </location>
</feature>
<feature type="glycosylation site" description="N-linked (GlcNAc...) asparagine" evidence="2">
    <location>
        <position position="276"/>
    </location>
</feature>
<feature type="glycosylation site" description="N-linked (GlcNAc...) asparagine" evidence="2">
    <location>
        <position position="498"/>
    </location>
</feature>
<feature type="disulfide bond" evidence="10 15">
    <location>
        <begin position="36"/>
        <end position="47"/>
    </location>
</feature>
<feature type="disulfide bond" evidence="10 15">
    <location>
        <begin position="125"/>
        <end position="155"/>
    </location>
</feature>
<feature type="disulfide bond" evidence="10 15">
    <location>
        <begin position="137"/>
        <end position="185"/>
    </location>
</feature>
<feature type="disulfide bond" evidence="10 15">
    <location>
        <begin position="156"/>
        <end position="312"/>
    </location>
</feature>
<feature type="disulfide bond" evidence="10 15">
    <location>
        <begin position="158"/>
        <end position="168"/>
    </location>
</feature>
<feature type="disulfide bond" evidence="10 15">
    <location>
        <begin position="295"/>
        <end position="319"/>
    </location>
</feature>
<feature type="disulfide bond" evidence="10 15">
    <location>
        <begin position="432"/>
        <end position="470"/>
    </location>
</feature>
<feature type="sequence conflict" description="In Ref. 1; AAY51999/AAY51998 and 2; BAE71143." evidence="13" ref="1 2">
    <original>H</original>
    <variation>P</variation>
    <location>
        <position position="127"/>
    </location>
</feature>
<feature type="strand" evidence="16">
    <location>
        <begin position="26"/>
        <end position="37"/>
    </location>
</feature>
<feature type="strand" evidence="16">
    <location>
        <begin position="41"/>
        <end position="43"/>
    </location>
</feature>
<feature type="strand" evidence="16">
    <location>
        <begin position="46"/>
        <end position="58"/>
    </location>
</feature>
<feature type="strand" evidence="16">
    <location>
        <begin position="66"/>
        <end position="71"/>
    </location>
</feature>
<feature type="strand" evidence="16">
    <location>
        <begin position="91"/>
        <end position="96"/>
    </location>
</feature>
<feature type="strand" evidence="16">
    <location>
        <begin position="100"/>
        <end position="113"/>
    </location>
</feature>
<feature type="strand" evidence="16">
    <location>
        <begin position="116"/>
        <end position="124"/>
    </location>
</feature>
<feature type="helix" evidence="16">
    <location>
        <begin position="131"/>
        <end position="134"/>
    </location>
</feature>
<feature type="turn" evidence="16">
    <location>
        <begin position="149"/>
        <end position="151"/>
    </location>
</feature>
<feature type="strand" evidence="16">
    <location>
        <begin position="154"/>
        <end position="164"/>
    </location>
</feature>
<feature type="helix" evidence="16">
    <location>
        <begin position="171"/>
        <end position="177"/>
    </location>
</feature>
<feature type="strand" evidence="16">
    <location>
        <begin position="181"/>
        <end position="187"/>
    </location>
</feature>
<feature type="strand" evidence="16">
    <location>
        <begin position="192"/>
        <end position="204"/>
    </location>
</feature>
<feature type="strand" evidence="16">
    <location>
        <begin position="207"/>
        <end position="215"/>
    </location>
</feature>
<feature type="strand" evidence="16">
    <location>
        <begin position="217"/>
        <end position="222"/>
    </location>
</feature>
<feature type="strand" evidence="16">
    <location>
        <begin position="224"/>
        <end position="226"/>
    </location>
</feature>
<feature type="strand" evidence="16">
    <location>
        <begin position="228"/>
        <end position="231"/>
    </location>
</feature>
<feature type="turn" evidence="16">
    <location>
        <begin position="232"/>
        <end position="235"/>
    </location>
</feature>
<feature type="strand" evidence="16">
    <location>
        <begin position="236"/>
        <end position="243"/>
    </location>
</feature>
<feature type="strand" evidence="16">
    <location>
        <begin position="256"/>
        <end position="261"/>
    </location>
</feature>
<feature type="turn" evidence="16">
    <location>
        <begin position="276"/>
        <end position="278"/>
    </location>
</feature>
<feature type="strand" evidence="16">
    <location>
        <begin position="281"/>
        <end position="284"/>
    </location>
</feature>
<feature type="helix" evidence="16">
    <location>
        <begin position="285"/>
        <end position="287"/>
    </location>
</feature>
<feature type="strand" evidence="16">
    <location>
        <begin position="294"/>
        <end position="299"/>
    </location>
</feature>
<feature type="helix" evidence="16">
    <location>
        <begin position="302"/>
        <end position="306"/>
    </location>
</feature>
<feature type="turn" evidence="16">
    <location>
        <begin position="309"/>
        <end position="313"/>
    </location>
</feature>
<feature type="turn" evidence="16">
    <location>
        <begin position="316"/>
        <end position="319"/>
    </location>
</feature>
<feature type="helix" evidence="16">
    <location>
        <begin position="324"/>
        <end position="336"/>
    </location>
</feature>
<feature type="strand" evidence="16">
    <location>
        <begin position="342"/>
        <end position="346"/>
    </location>
</feature>
<feature type="strand" evidence="16">
    <location>
        <begin position="349"/>
        <end position="351"/>
    </location>
</feature>
<feature type="strand" evidence="16">
    <location>
        <begin position="363"/>
        <end position="366"/>
    </location>
</feature>
<feature type="strand" evidence="16">
    <location>
        <begin position="372"/>
        <end position="388"/>
    </location>
</feature>
<feature type="strand" evidence="16">
    <location>
        <begin position="393"/>
        <end position="399"/>
    </location>
</feature>
<feature type="strand" evidence="16">
    <location>
        <begin position="404"/>
        <end position="408"/>
    </location>
</feature>
<feature type="strand" evidence="16">
    <location>
        <begin position="413"/>
        <end position="418"/>
    </location>
</feature>
<feature type="strand" evidence="16">
    <location>
        <begin position="420"/>
        <end position="422"/>
    </location>
</feature>
<feature type="strand" evidence="16">
    <location>
        <begin position="424"/>
        <end position="431"/>
    </location>
</feature>
<feature type="strand" evidence="16">
    <location>
        <begin position="442"/>
        <end position="446"/>
    </location>
</feature>
<feature type="strand" evidence="16">
    <location>
        <begin position="451"/>
        <end position="454"/>
    </location>
</feature>
<feature type="strand" evidence="16">
    <location>
        <begin position="467"/>
        <end position="475"/>
    </location>
</feature>
<feature type="strand" evidence="16">
    <location>
        <begin position="477"/>
        <end position="490"/>
    </location>
</feature>
<accession>F4JP36</accession>
<accession>Q1AP31</accession>
<accession>Q2PGG6</accession>
<accession>Q9T0D9</accession>
<organism>
    <name type="scientific">Arabidopsis thaliana</name>
    <name type="common">Mouse-ear cress</name>
    <dbReference type="NCBI Taxonomy" id="3702"/>
    <lineage>
        <taxon>Eukaryota</taxon>
        <taxon>Viridiplantae</taxon>
        <taxon>Streptophyta</taxon>
        <taxon>Embryophyta</taxon>
        <taxon>Tracheophyta</taxon>
        <taxon>Spermatophyta</taxon>
        <taxon>Magnoliopsida</taxon>
        <taxon>eudicotyledons</taxon>
        <taxon>Gunneridae</taxon>
        <taxon>Pentapetalae</taxon>
        <taxon>rosids</taxon>
        <taxon>malvids</taxon>
        <taxon>Brassicales</taxon>
        <taxon>Brassicaceae</taxon>
        <taxon>Camelineae</taxon>
        <taxon>Arabidopsis</taxon>
    </lineage>
</organism>